<name>Y1818_BACFR</name>
<accession>Q64VB3</accession>
<comment type="subcellular location">
    <subcellularLocation>
        <location evidence="3">Cell membrane</location>
        <topology evidence="3">Multi-pass membrane protein</topology>
    </subcellularLocation>
</comment>
<comment type="similarity">
    <text evidence="3">Belongs to the AAE transporter (TC 2.A.81) family.</text>
</comment>
<dbReference type="EMBL" id="AP006841">
    <property type="protein sequence ID" value="BAD48565.1"/>
    <property type="molecule type" value="Genomic_DNA"/>
</dbReference>
<dbReference type="RefSeq" id="WP_005786793.1">
    <property type="nucleotide sequence ID" value="NZ_UYXF01000005.1"/>
</dbReference>
<dbReference type="RefSeq" id="YP_099099.1">
    <property type="nucleotide sequence ID" value="NC_006347.1"/>
</dbReference>
<dbReference type="SMR" id="Q64VB3"/>
<dbReference type="STRING" id="295405.BF1818"/>
<dbReference type="KEGG" id="bfr:BF1818"/>
<dbReference type="PATRIC" id="fig|295405.11.peg.1766"/>
<dbReference type="HOGENOM" id="CLU_035023_3_1_10"/>
<dbReference type="OrthoDB" id="9155749at2"/>
<dbReference type="Proteomes" id="UP000002197">
    <property type="component" value="Chromosome"/>
</dbReference>
<dbReference type="GO" id="GO:0005886">
    <property type="term" value="C:plasma membrane"/>
    <property type="evidence" value="ECO:0007669"/>
    <property type="project" value="UniProtKB-SubCell"/>
</dbReference>
<dbReference type="GO" id="GO:0008324">
    <property type="term" value="F:monoatomic cation transmembrane transporter activity"/>
    <property type="evidence" value="ECO:0007669"/>
    <property type="project" value="InterPro"/>
</dbReference>
<dbReference type="GO" id="GO:0006813">
    <property type="term" value="P:potassium ion transport"/>
    <property type="evidence" value="ECO:0007669"/>
    <property type="project" value="InterPro"/>
</dbReference>
<dbReference type="Gene3D" id="3.30.70.1450">
    <property type="entry name" value="Regulator of K+ conductance, C-terminal domain"/>
    <property type="match status" value="2"/>
</dbReference>
<dbReference type="InterPro" id="IPR050144">
    <property type="entry name" value="AAE_transporter"/>
</dbReference>
<dbReference type="InterPro" id="IPR006037">
    <property type="entry name" value="RCK_C"/>
</dbReference>
<dbReference type="InterPro" id="IPR036721">
    <property type="entry name" value="RCK_C_sf"/>
</dbReference>
<dbReference type="InterPro" id="IPR006512">
    <property type="entry name" value="YidE_YbjL"/>
</dbReference>
<dbReference type="NCBIfam" id="NF003007">
    <property type="entry name" value="PRK03818.1"/>
    <property type="match status" value="1"/>
</dbReference>
<dbReference type="NCBIfam" id="TIGR01625">
    <property type="entry name" value="YidE_YbjL_dupl"/>
    <property type="match status" value="2"/>
</dbReference>
<dbReference type="PANTHER" id="PTHR30445">
    <property type="entry name" value="K(+)_H(+) ANTIPORTER SUBUNIT KHTT"/>
    <property type="match status" value="1"/>
</dbReference>
<dbReference type="PANTHER" id="PTHR30445:SF3">
    <property type="entry name" value="TRANSPORT PROTEIN YIDE-RELATED"/>
    <property type="match status" value="1"/>
</dbReference>
<dbReference type="Pfam" id="PF06826">
    <property type="entry name" value="Asp-Al_Ex"/>
    <property type="match status" value="2"/>
</dbReference>
<dbReference type="Pfam" id="PF02080">
    <property type="entry name" value="TrkA_C"/>
    <property type="match status" value="2"/>
</dbReference>
<dbReference type="SUPFAM" id="SSF116726">
    <property type="entry name" value="TrkA C-terminal domain-like"/>
    <property type="match status" value="2"/>
</dbReference>
<dbReference type="PROSITE" id="PS51202">
    <property type="entry name" value="RCK_C"/>
    <property type="match status" value="2"/>
</dbReference>
<gene>
    <name type="ordered locus">BF1818</name>
</gene>
<protein>
    <recommendedName>
        <fullName>Uncharacterized transporter BF1818</fullName>
    </recommendedName>
</protein>
<organism>
    <name type="scientific">Bacteroides fragilis (strain YCH46)</name>
    <dbReference type="NCBI Taxonomy" id="295405"/>
    <lineage>
        <taxon>Bacteria</taxon>
        <taxon>Pseudomonadati</taxon>
        <taxon>Bacteroidota</taxon>
        <taxon>Bacteroidia</taxon>
        <taxon>Bacteroidales</taxon>
        <taxon>Bacteroidaceae</taxon>
        <taxon>Bacteroides</taxon>
    </lineage>
</organism>
<evidence type="ECO:0000255" key="1"/>
<evidence type="ECO:0000255" key="2">
    <source>
        <dbReference type="PROSITE-ProRule" id="PRU00544"/>
    </source>
</evidence>
<evidence type="ECO:0000305" key="3"/>
<reference key="1">
    <citation type="journal article" date="2004" name="Proc. Natl. Acad. Sci. U.S.A.">
        <title>Genomic analysis of Bacteroides fragilis reveals extensive DNA inversions regulating cell surface adaptation.</title>
        <authorList>
            <person name="Kuwahara T."/>
            <person name="Yamashita A."/>
            <person name="Hirakawa H."/>
            <person name="Nakayama H."/>
            <person name="Toh H."/>
            <person name="Okada N."/>
            <person name="Kuhara S."/>
            <person name="Hattori M."/>
            <person name="Hayashi T."/>
            <person name="Ohnishi Y."/>
        </authorList>
    </citation>
    <scope>NUCLEOTIDE SEQUENCE [LARGE SCALE GENOMIC DNA]</scope>
    <source>
        <strain>YCH46</strain>
    </source>
</reference>
<proteinExistence type="inferred from homology"/>
<sequence length="553" mass="59355">MEWLYSLFIEHSALQAVVVLSLISAIGLGLGKIHVCGISLGVTFVFFAGILAGHFGLSIDPQMLNYAESFGLIIFVYALGLQVGPGFFSSFRKGGVTLNMLAIAVVILGTFLAVVCSYTTGVSLPNMVGILCGATTNTPALGAAQQTLKQMGLESSTPALGCAVAYPLGVIGVILAVLLIRKLLVRREDLEVQEKDDANKTYIAAFQVHNPAIFNKSIKDIAHMSYPKFVISRLWRDGNVSIPTSEKIIKEGDRLLVVTSEKDALALTVLFGEQENTDWNKEDIDWNAIDSQLISQRIVVTRPELNGKKLGALRLRNHYGINISRVYRSGVQLLATPELTLQLGDRLTVVGEAAAIQNVEKVLGNAIKSLKEPNLVAVFVGIILGLALGAVPFSIPGISTPVRLGLAGGPIIVGILIGTFGPRLHMITYTTRSANLMLRALGLSLYLACLGLDAGAHFFDTVFRPEGLLWIGLGFGLTLVPTVLVGFFAFKIMKIDFGSVSGMLCGSMANPMALNYANDTIPGDNPSVAYATVYPLSMFLRVIIAQVLLMFLL</sequence>
<keyword id="KW-1003">Cell membrane</keyword>
<keyword id="KW-0472">Membrane</keyword>
<keyword id="KW-0677">Repeat</keyword>
<keyword id="KW-0812">Transmembrane</keyword>
<keyword id="KW-1133">Transmembrane helix</keyword>
<keyword id="KW-0813">Transport</keyword>
<feature type="chain" id="PRO_0000208750" description="Uncharacterized transporter BF1818">
    <location>
        <begin position="1"/>
        <end position="553"/>
    </location>
</feature>
<feature type="transmembrane region" description="Helical" evidence="1">
    <location>
        <begin position="13"/>
        <end position="30"/>
    </location>
</feature>
<feature type="transmembrane region" description="Helical" evidence="1">
    <location>
        <begin position="37"/>
        <end position="59"/>
    </location>
</feature>
<feature type="transmembrane region" description="Helical" evidence="1">
    <location>
        <begin position="69"/>
        <end position="91"/>
    </location>
</feature>
<feature type="transmembrane region" description="Helical" evidence="1">
    <location>
        <begin position="98"/>
        <end position="120"/>
    </location>
</feature>
<feature type="transmembrane region" description="Helical" evidence="1">
    <location>
        <begin position="157"/>
        <end position="179"/>
    </location>
</feature>
<feature type="transmembrane region" description="Helical" evidence="1">
    <location>
        <begin position="375"/>
        <end position="397"/>
    </location>
</feature>
<feature type="transmembrane region" description="Helical" evidence="1">
    <location>
        <begin position="402"/>
        <end position="424"/>
    </location>
</feature>
<feature type="transmembrane region" description="Helical" evidence="1">
    <location>
        <begin position="436"/>
        <end position="458"/>
    </location>
</feature>
<feature type="transmembrane region" description="Helical" evidence="1">
    <location>
        <begin position="468"/>
        <end position="490"/>
    </location>
</feature>
<feature type="transmembrane region" description="Helical" evidence="1">
    <location>
        <begin position="497"/>
        <end position="514"/>
    </location>
</feature>
<feature type="transmembrane region" description="Helical" evidence="1">
    <location>
        <begin position="529"/>
        <end position="551"/>
    </location>
</feature>
<feature type="domain" description="RCK C-terminal 1" evidence="2">
    <location>
        <begin position="190"/>
        <end position="273"/>
    </location>
</feature>
<feature type="domain" description="RCK C-terminal 2" evidence="2">
    <location>
        <begin position="281"/>
        <end position="365"/>
    </location>
</feature>